<sequence length="157" mass="18039">MNKKETRHRLIRSLISETTIHTQQELQERLQKNGITITQATLSRDMKELNLVKVTSGNDTHYEALAISQTRWEHRLRFYMEDALVMLKIVQHQIILKTLPGLAQSFGSILDAMQIPEIVATVCGDDTCLIVCEDNEQAKACYETLSHYTPPFFFSNK</sequence>
<organism>
    <name type="scientific">Streptococcus pyogenes serotype M3 (strain SSI-1)</name>
    <dbReference type="NCBI Taxonomy" id="193567"/>
    <lineage>
        <taxon>Bacteria</taxon>
        <taxon>Bacillati</taxon>
        <taxon>Bacillota</taxon>
        <taxon>Bacilli</taxon>
        <taxon>Lactobacillales</taxon>
        <taxon>Streptococcaceae</taxon>
        <taxon>Streptococcus</taxon>
    </lineage>
</organism>
<evidence type="ECO:0000250" key="1"/>
<evidence type="ECO:0000305" key="2"/>
<reference key="1">
    <citation type="journal article" date="2003" name="Genome Res.">
        <title>Genome sequence of an M3 strain of Streptococcus pyogenes reveals a large-scale genomic rearrangement in invasive strains and new insights into phage evolution.</title>
        <authorList>
            <person name="Nakagawa I."/>
            <person name="Kurokawa K."/>
            <person name="Yamashita A."/>
            <person name="Nakata M."/>
            <person name="Tomiyasu Y."/>
            <person name="Okahashi N."/>
            <person name="Kawabata S."/>
            <person name="Yamazaki K."/>
            <person name="Shiba T."/>
            <person name="Yasunaga T."/>
            <person name="Hayashi H."/>
            <person name="Hattori M."/>
            <person name="Hamada S."/>
        </authorList>
    </citation>
    <scope>NUCLEOTIDE SEQUENCE [LARGE SCALE GENOMIC DNA]</scope>
    <source>
        <strain>SSI-1</strain>
    </source>
</reference>
<accession>P0CZ69</accession>
<accession>Q7CEX2</accession>
<accession>Q879A7</accession>
<protein>
    <recommendedName>
        <fullName>Arginine regulator</fullName>
    </recommendedName>
</protein>
<feature type="chain" id="PRO_0000411272" description="Arginine regulator">
    <location>
        <begin position="1"/>
        <end position="157"/>
    </location>
</feature>
<name>ARGR1_STRPQ</name>
<keyword id="KW-0056">Arginine metabolism</keyword>
<keyword id="KW-0963">Cytoplasm</keyword>
<keyword id="KW-0238">DNA-binding</keyword>
<keyword id="KW-0804">Transcription</keyword>
<keyword id="KW-0805">Transcription regulation</keyword>
<gene>
    <name type="primary">argR1</name>
    <name type="ordered locus">SPs0664</name>
</gene>
<comment type="function">
    <text evidence="1">Regulates the transcription of the arc operon, involved in arginine catabolism.</text>
</comment>
<comment type="pathway">
    <text>Amino-acid degradation; L-arginine degradation via ADI pathway.</text>
</comment>
<comment type="subcellular location">
    <subcellularLocation>
        <location evidence="1">Cytoplasm</location>
    </subcellularLocation>
</comment>
<comment type="similarity">
    <text evidence="2">Belongs to the ArgR family.</text>
</comment>
<proteinExistence type="inferred from homology"/>
<dbReference type="EMBL" id="BA000034">
    <property type="protein sequence ID" value="BAC63759.1"/>
    <property type="molecule type" value="Genomic_DNA"/>
</dbReference>
<dbReference type="RefSeq" id="WP_011106696.1">
    <property type="nucleotide sequence ID" value="NC_004606.1"/>
</dbReference>
<dbReference type="SMR" id="P0CZ69"/>
<dbReference type="KEGG" id="sps:SPs0664"/>
<dbReference type="HOGENOM" id="CLU_097103_3_1_9"/>
<dbReference type="UniPathway" id="UPA00254"/>
<dbReference type="GO" id="GO:0005737">
    <property type="term" value="C:cytoplasm"/>
    <property type="evidence" value="ECO:0007669"/>
    <property type="project" value="UniProtKB-SubCell"/>
</dbReference>
<dbReference type="GO" id="GO:0034618">
    <property type="term" value="F:arginine binding"/>
    <property type="evidence" value="ECO:0007669"/>
    <property type="project" value="InterPro"/>
</dbReference>
<dbReference type="GO" id="GO:0003677">
    <property type="term" value="F:DNA binding"/>
    <property type="evidence" value="ECO:0007669"/>
    <property type="project" value="UniProtKB-KW"/>
</dbReference>
<dbReference type="GO" id="GO:0003700">
    <property type="term" value="F:DNA-binding transcription factor activity"/>
    <property type="evidence" value="ECO:0007669"/>
    <property type="project" value="UniProtKB-UniRule"/>
</dbReference>
<dbReference type="GO" id="GO:0019547">
    <property type="term" value="P:arginine catabolic process to ornithine"/>
    <property type="evidence" value="ECO:0007669"/>
    <property type="project" value="UniProtKB-UniPathway"/>
</dbReference>
<dbReference type="GO" id="GO:0051259">
    <property type="term" value="P:protein complex oligomerization"/>
    <property type="evidence" value="ECO:0007669"/>
    <property type="project" value="InterPro"/>
</dbReference>
<dbReference type="GO" id="GO:1900079">
    <property type="term" value="P:regulation of arginine biosynthetic process"/>
    <property type="evidence" value="ECO:0007669"/>
    <property type="project" value="UniProtKB-UniRule"/>
</dbReference>
<dbReference type="Gene3D" id="3.30.1360.40">
    <property type="match status" value="1"/>
</dbReference>
<dbReference type="Gene3D" id="1.10.10.10">
    <property type="entry name" value="Winged helix-like DNA-binding domain superfamily/Winged helix DNA-binding domain"/>
    <property type="match status" value="1"/>
</dbReference>
<dbReference type="HAMAP" id="MF_00173">
    <property type="entry name" value="Arg_repressor"/>
    <property type="match status" value="1"/>
</dbReference>
<dbReference type="InterPro" id="IPR001669">
    <property type="entry name" value="Arg_repress"/>
</dbReference>
<dbReference type="InterPro" id="IPR020899">
    <property type="entry name" value="Arg_repress_C"/>
</dbReference>
<dbReference type="InterPro" id="IPR036251">
    <property type="entry name" value="Arg_repress_C_sf"/>
</dbReference>
<dbReference type="InterPro" id="IPR020900">
    <property type="entry name" value="Arg_repress_DNA-bd"/>
</dbReference>
<dbReference type="InterPro" id="IPR036388">
    <property type="entry name" value="WH-like_DNA-bd_sf"/>
</dbReference>
<dbReference type="InterPro" id="IPR036390">
    <property type="entry name" value="WH_DNA-bd_sf"/>
</dbReference>
<dbReference type="PANTHER" id="PTHR34471">
    <property type="entry name" value="ARGININE REPRESSOR"/>
    <property type="match status" value="1"/>
</dbReference>
<dbReference type="PANTHER" id="PTHR34471:SF1">
    <property type="entry name" value="ARGININE REPRESSOR"/>
    <property type="match status" value="1"/>
</dbReference>
<dbReference type="Pfam" id="PF01316">
    <property type="entry name" value="Arg_repressor"/>
    <property type="match status" value="1"/>
</dbReference>
<dbReference type="Pfam" id="PF02863">
    <property type="entry name" value="Arg_repressor_C"/>
    <property type="match status" value="1"/>
</dbReference>
<dbReference type="PRINTS" id="PR01467">
    <property type="entry name" value="ARGREPRESSOR"/>
</dbReference>
<dbReference type="SUPFAM" id="SSF55252">
    <property type="entry name" value="C-terminal domain of arginine repressor"/>
    <property type="match status" value="1"/>
</dbReference>
<dbReference type="SUPFAM" id="SSF46785">
    <property type="entry name" value="Winged helix' DNA-binding domain"/>
    <property type="match status" value="1"/>
</dbReference>